<name>RL29_ALIB4</name>
<proteinExistence type="inferred from homology"/>
<sequence length="63" mass="7205">MNYTDLKDKNLNELQVLLKEKKVLLFELKAKLKTMQLTNTSELRATKKDIAKIQTALTAVKAN</sequence>
<gene>
    <name evidence="1" type="primary">rpmC</name>
    <name type="ordered locus">Abu_0760</name>
</gene>
<accession>A8ESV1</accession>
<reference key="1">
    <citation type="journal article" date="2007" name="PLoS ONE">
        <title>The complete genome sequence and analysis of the Epsilonproteobacterium Arcobacter butzleri.</title>
        <authorList>
            <person name="Miller W.G."/>
            <person name="Parker C.T."/>
            <person name="Rubenfield M."/>
            <person name="Mendz G.L."/>
            <person name="Woesten M.M.S.M."/>
            <person name="Ussery D.W."/>
            <person name="Stolz J.F."/>
            <person name="Binnewies T.T."/>
            <person name="Hallin P.F."/>
            <person name="Wang G."/>
            <person name="Malek J.A."/>
            <person name="Rogosin A."/>
            <person name="Stanker L.H."/>
            <person name="Mandrell R.E."/>
        </authorList>
    </citation>
    <scope>NUCLEOTIDE SEQUENCE [LARGE SCALE GENOMIC DNA]</scope>
    <source>
        <strain>RM4018</strain>
    </source>
</reference>
<dbReference type="EMBL" id="CP000361">
    <property type="protein sequence ID" value="ABV67025.1"/>
    <property type="molecule type" value="Genomic_DNA"/>
</dbReference>
<dbReference type="RefSeq" id="WP_004510828.1">
    <property type="nucleotide sequence ID" value="NC_009850.1"/>
</dbReference>
<dbReference type="SMR" id="A8ESV1"/>
<dbReference type="STRING" id="367737.Abu_0760"/>
<dbReference type="GeneID" id="24304940"/>
<dbReference type="KEGG" id="abu:Abu_0760"/>
<dbReference type="eggNOG" id="COG0255">
    <property type="taxonomic scope" value="Bacteria"/>
</dbReference>
<dbReference type="HOGENOM" id="CLU_158491_7_1_7"/>
<dbReference type="Proteomes" id="UP000001136">
    <property type="component" value="Chromosome"/>
</dbReference>
<dbReference type="GO" id="GO:1990904">
    <property type="term" value="C:ribonucleoprotein complex"/>
    <property type="evidence" value="ECO:0007669"/>
    <property type="project" value="UniProtKB-KW"/>
</dbReference>
<dbReference type="GO" id="GO:0005840">
    <property type="term" value="C:ribosome"/>
    <property type="evidence" value="ECO:0007669"/>
    <property type="project" value="UniProtKB-KW"/>
</dbReference>
<dbReference type="GO" id="GO:0003735">
    <property type="term" value="F:structural constituent of ribosome"/>
    <property type="evidence" value="ECO:0007669"/>
    <property type="project" value="InterPro"/>
</dbReference>
<dbReference type="GO" id="GO:0006412">
    <property type="term" value="P:translation"/>
    <property type="evidence" value="ECO:0007669"/>
    <property type="project" value="UniProtKB-UniRule"/>
</dbReference>
<dbReference type="Gene3D" id="1.10.287.310">
    <property type="match status" value="1"/>
</dbReference>
<dbReference type="HAMAP" id="MF_00374">
    <property type="entry name" value="Ribosomal_uL29"/>
    <property type="match status" value="1"/>
</dbReference>
<dbReference type="InterPro" id="IPR001854">
    <property type="entry name" value="Ribosomal_uL29"/>
</dbReference>
<dbReference type="InterPro" id="IPR018254">
    <property type="entry name" value="Ribosomal_uL29_CS"/>
</dbReference>
<dbReference type="InterPro" id="IPR036049">
    <property type="entry name" value="Ribosomal_uL29_sf"/>
</dbReference>
<dbReference type="NCBIfam" id="TIGR00012">
    <property type="entry name" value="L29"/>
    <property type="match status" value="1"/>
</dbReference>
<dbReference type="Pfam" id="PF00831">
    <property type="entry name" value="Ribosomal_L29"/>
    <property type="match status" value="1"/>
</dbReference>
<dbReference type="SUPFAM" id="SSF46561">
    <property type="entry name" value="Ribosomal protein L29 (L29p)"/>
    <property type="match status" value="1"/>
</dbReference>
<dbReference type="PROSITE" id="PS00579">
    <property type="entry name" value="RIBOSOMAL_L29"/>
    <property type="match status" value="1"/>
</dbReference>
<comment type="similarity">
    <text evidence="1">Belongs to the universal ribosomal protein uL29 family.</text>
</comment>
<keyword id="KW-1185">Reference proteome</keyword>
<keyword id="KW-0687">Ribonucleoprotein</keyword>
<keyword id="KW-0689">Ribosomal protein</keyword>
<evidence type="ECO:0000255" key="1">
    <source>
        <dbReference type="HAMAP-Rule" id="MF_00374"/>
    </source>
</evidence>
<evidence type="ECO:0000305" key="2"/>
<protein>
    <recommendedName>
        <fullName evidence="1">Large ribosomal subunit protein uL29</fullName>
    </recommendedName>
    <alternativeName>
        <fullName evidence="2">50S ribosomal protein L29</fullName>
    </alternativeName>
</protein>
<organism>
    <name type="scientific">Aliarcobacter butzleri (strain RM4018)</name>
    <name type="common">Arcobacter butzleri</name>
    <dbReference type="NCBI Taxonomy" id="367737"/>
    <lineage>
        <taxon>Bacteria</taxon>
        <taxon>Pseudomonadati</taxon>
        <taxon>Campylobacterota</taxon>
        <taxon>Epsilonproteobacteria</taxon>
        <taxon>Campylobacterales</taxon>
        <taxon>Arcobacteraceae</taxon>
        <taxon>Aliarcobacter</taxon>
    </lineage>
</organism>
<feature type="chain" id="PRO_1000059963" description="Large ribosomal subunit protein uL29">
    <location>
        <begin position="1"/>
        <end position="63"/>
    </location>
</feature>